<accession>B3DXV4</accession>
<keyword id="KW-0687">Ribonucleoprotein</keyword>
<keyword id="KW-0689">Ribosomal protein</keyword>
<gene>
    <name evidence="1" type="primary">rpsU</name>
    <name type="ordered locus">Minf_1852</name>
</gene>
<sequence>MTEVKVKKGESIDKALRRLKRKLDREGTLREARLRKAFEKPCNRRRRKAKEARLKLYSSLY</sequence>
<name>RS21_METI4</name>
<proteinExistence type="inferred from homology"/>
<organism>
    <name type="scientific">Methylacidiphilum infernorum (isolate V4)</name>
    <name type="common">Methylokorus infernorum (strain V4)</name>
    <dbReference type="NCBI Taxonomy" id="481448"/>
    <lineage>
        <taxon>Bacteria</taxon>
        <taxon>Pseudomonadati</taxon>
        <taxon>Verrucomicrobiota</taxon>
        <taxon>Methylacidiphilae</taxon>
        <taxon>Methylacidiphilales</taxon>
        <taxon>Methylacidiphilaceae</taxon>
        <taxon>Methylacidiphilum (ex Ratnadevi et al. 2023)</taxon>
    </lineage>
</organism>
<protein>
    <recommendedName>
        <fullName evidence="1">Small ribosomal subunit protein bS21</fullName>
    </recommendedName>
    <alternativeName>
        <fullName evidence="2">30S ribosomal protein S21</fullName>
    </alternativeName>
</protein>
<feature type="chain" id="PRO_1000120638" description="Small ribosomal subunit protein bS21">
    <location>
        <begin position="1"/>
        <end position="61"/>
    </location>
</feature>
<comment type="similarity">
    <text evidence="1">Belongs to the bacterial ribosomal protein bS21 family.</text>
</comment>
<evidence type="ECO:0000255" key="1">
    <source>
        <dbReference type="HAMAP-Rule" id="MF_00358"/>
    </source>
</evidence>
<evidence type="ECO:0000305" key="2"/>
<reference key="1">
    <citation type="journal article" date="2008" name="Biol. Direct">
        <title>Complete genome sequence of the extremely acidophilic methanotroph isolate V4, Methylacidiphilum infernorum, a representative of the bacterial phylum Verrucomicrobia.</title>
        <authorList>
            <person name="Hou S."/>
            <person name="Makarova K.S."/>
            <person name="Saw J.H."/>
            <person name="Senin P."/>
            <person name="Ly B.V."/>
            <person name="Zhou Z."/>
            <person name="Ren Y."/>
            <person name="Wang J."/>
            <person name="Galperin M.Y."/>
            <person name="Omelchenko M.V."/>
            <person name="Wolf Y.I."/>
            <person name="Yutin N."/>
            <person name="Koonin E.V."/>
            <person name="Stott M.B."/>
            <person name="Mountain B.W."/>
            <person name="Crowe M.A."/>
            <person name="Smirnova A.V."/>
            <person name="Dunfield P.F."/>
            <person name="Feng L."/>
            <person name="Wang L."/>
            <person name="Alam M."/>
        </authorList>
    </citation>
    <scope>NUCLEOTIDE SEQUENCE [LARGE SCALE GENOMIC DNA]</scope>
    <source>
        <strain>Isolate V4</strain>
    </source>
</reference>
<dbReference type="EMBL" id="CP000975">
    <property type="protein sequence ID" value="ACD83906.1"/>
    <property type="molecule type" value="Genomic_DNA"/>
</dbReference>
<dbReference type="RefSeq" id="WP_012464188.1">
    <property type="nucleotide sequence ID" value="NC_010794.1"/>
</dbReference>
<dbReference type="SMR" id="B3DXV4"/>
<dbReference type="STRING" id="481448.Minf_1852"/>
<dbReference type="KEGG" id="min:Minf_1852"/>
<dbReference type="eggNOG" id="COG0828">
    <property type="taxonomic scope" value="Bacteria"/>
</dbReference>
<dbReference type="HOGENOM" id="CLU_159258_2_3_0"/>
<dbReference type="Proteomes" id="UP000009149">
    <property type="component" value="Chromosome"/>
</dbReference>
<dbReference type="GO" id="GO:1990904">
    <property type="term" value="C:ribonucleoprotein complex"/>
    <property type="evidence" value="ECO:0007669"/>
    <property type="project" value="UniProtKB-KW"/>
</dbReference>
<dbReference type="GO" id="GO:0005840">
    <property type="term" value="C:ribosome"/>
    <property type="evidence" value="ECO:0007669"/>
    <property type="project" value="UniProtKB-KW"/>
</dbReference>
<dbReference type="GO" id="GO:0003735">
    <property type="term" value="F:structural constituent of ribosome"/>
    <property type="evidence" value="ECO:0007669"/>
    <property type="project" value="InterPro"/>
</dbReference>
<dbReference type="GO" id="GO:0006412">
    <property type="term" value="P:translation"/>
    <property type="evidence" value="ECO:0007669"/>
    <property type="project" value="UniProtKB-UniRule"/>
</dbReference>
<dbReference type="Gene3D" id="1.20.5.1150">
    <property type="entry name" value="Ribosomal protein S8"/>
    <property type="match status" value="1"/>
</dbReference>
<dbReference type="HAMAP" id="MF_00358">
    <property type="entry name" value="Ribosomal_bS21"/>
    <property type="match status" value="1"/>
</dbReference>
<dbReference type="InterPro" id="IPR001911">
    <property type="entry name" value="Ribosomal_bS21"/>
</dbReference>
<dbReference type="InterPro" id="IPR018278">
    <property type="entry name" value="Ribosomal_bS21_CS"/>
</dbReference>
<dbReference type="InterPro" id="IPR038380">
    <property type="entry name" value="Ribosomal_bS21_sf"/>
</dbReference>
<dbReference type="NCBIfam" id="TIGR00030">
    <property type="entry name" value="S21p"/>
    <property type="match status" value="1"/>
</dbReference>
<dbReference type="PANTHER" id="PTHR21109">
    <property type="entry name" value="MITOCHONDRIAL 28S RIBOSOMAL PROTEIN S21"/>
    <property type="match status" value="1"/>
</dbReference>
<dbReference type="PANTHER" id="PTHR21109:SF0">
    <property type="entry name" value="SMALL RIBOSOMAL SUBUNIT PROTEIN BS21M"/>
    <property type="match status" value="1"/>
</dbReference>
<dbReference type="Pfam" id="PF01165">
    <property type="entry name" value="Ribosomal_S21"/>
    <property type="match status" value="1"/>
</dbReference>
<dbReference type="PRINTS" id="PR00976">
    <property type="entry name" value="RIBOSOMALS21"/>
</dbReference>
<dbReference type="PROSITE" id="PS01181">
    <property type="entry name" value="RIBOSOMAL_S21"/>
    <property type="match status" value="1"/>
</dbReference>